<keyword id="KW-0244">Early protein</keyword>
<keyword id="KW-1035">Host cytoplasm</keyword>
<keyword id="KW-0945">Host-virus interaction</keyword>
<keyword id="KW-0378">Hydrolase</keyword>
<keyword id="KW-0546">Nucleotide metabolism</keyword>
<keyword id="KW-0553">Oncogene</keyword>
<feature type="chain" id="PRO_0000221784" description="E4-ORF1">
    <location>
        <begin position="1"/>
        <end position="125"/>
    </location>
</feature>
<feature type="short sequence motif" description="PDZ-binding" evidence="1">
    <location>
        <begin position="122"/>
        <end position="125"/>
    </location>
</feature>
<feature type="mutagenesis site" description="Complete loss of transformation." evidence="4">
    <original>FHIPPHGV</original>
    <variation>IHIPPQGA</variation>
    <location>
        <begin position="34"/>
        <end position="41"/>
    </location>
</feature>
<feature type="mutagenesis site" description="Complete loss of transformation." evidence="4">
    <original>L</original>
    <variation>Q</variation>
    <location>
        <position position="89"/>
    </location>
</feature>
<feature type="mutagenesis site" description="Complete loss of transformation." evidence="4">
    <original>F</original>
    <variation>S</variation>
    <location>
        <position position="91"/>
    </location>
</feature>
<feature type="mutagenesis site" description="Partial loss of transformation. Complete loss of binding to MPDZ. Localizes aberrantly in the nucleus." evidence="2 4">
    <original>A</original>
    <variation>D</variation>
    <location>
        <position position="122"/>
    </location>
</feature>
<feature type="mutagenesis site" description="Complete loss of transformation. Complete loss of binding to MPDZ. Localizes aberrantly in the nucleus." evidence="2 4">
    <original>TLV</original>
    <variation>P</variation>
    <location>
        <begin position="123"/>
        <end position="125"/>
    </location>
</feature>
<feature type="mutagenesis site" description="Partial loss of transformation. Partial loss of binding to MPDZ. Localizes aberrantly in the nucleus." evidence="2">
    <original>L</original>
    <variation>P</variation>
    <location>
        <position position="124"/>
    </location>
</feature>
<accession>P89079</accession>
<reference key="1">
    <citation type="journal article" date="1996" name="Breast Cancer Res. Treat.">
        <title>Mammary tumors induced by human adenovirus type 9: a role for the viral early region 4 gene.</title>
        <authorList>
            <person name="Javier R.T."/>
            <person name="Shenk T."/>
        </authorList>
    </citation>
    <scope>NUCLEOTIDE SEQUENCE [GENOMIC DNA]</scope>
</reference>
<reference key="2">
    <citation type="submission" date="2004-11" db="EMBL/GenBank/DDBJ databases">
        <title>Adenovirus type 9, complete sequence.</title>
        <authorList>
            <person name="Buettner W.H."/>
            <person name="Veres-Molnar S.K."/>
        </authorList>
    </citation>
    <scope>NUCLEOTIDE SEQUENCE [LARGE SCALE GENOMIC DNA]</scope>
    <source>
        <strain>Isolate ATCC VR-1086 / Hicks / V-209-003-014</strain>
    </source>
</reference>
<reference key="3">
    <citation type="journal article" date="1994" name="J. Virol.">
        <title>Adenovirus type 9 E4 open reading frame 1 encodes a transforming protein required for the production of mammary tumors in rats.</title>
        <authorList>
            <person name="Javier R.T."/>
        </authorList>
    </citation>
    <scope>FUNCTION AS ONCOGENE</scope>
</reference>
<reference key="4">
    <citation type="journal article" date="1997" name="J. Virol.">
        <title>Mutant adenovirus type 9 E4 ORF1 genes define three protein regions required for transformation of CREF cells.</title>
        <authorList>
            <person name="Weiss R.S."/>
            <person name="Gold M.O."/>
            <person name="Vogel H."/>
            <person name="Javier R.T."/>
        </authorList>
    </citation>
    <scope>SUBCELLULAR LOCATION</scope>
    <scope>MUTAGENESIS OF 34-PHE--VAL-41; LEU-89; PHE-91; ALA-122 AND 123-THR--VAL-125</scope>
</reference>
<reference key="5">
    <citation type="journal article" date="2000" name="J. Virol.">
        <title>Multi-PDZ domain protein MUPP1 is a cellular target for both adenovirus E4-ORF1 and high-risk papillomavirus type 18 E6 oncoproteins.</title>
        <authorList>
            <person name="Lee S.S."/>
            <person name="Glaunsinger B."/>
            <person name="Mantovani F."/>
            <person name="Banks L."/>
            <person name="Javier R.T."/>
        </authorList>
    </citation>
    <scope>INTERACTION WITH HUMAN MPDZ</scope>
    <scope>MUTAGENESIS OF ALA-122; 123-THR--VAL-125 AND LEU-124</scope>
</reference>
<gene>
    <name type="primary">E4</name>
</gene>
<organismHost>
    <name type="scientific">Homo sapiens</name>
    <name type="common">Human</name>
    <dbReference type="NCBI Taxonomy" id="9606"/>
</organismHost>
<name>E4OR1_ADE09</name>
<proteinExistence type="evidence at protein level"/>
<evidence type="ECO:0000255" key="1"/>
<evidence type="ECO:0000269" key="2">
    <source>
    </source>
</evidence>
<evidence type="ECO:0000269" key="3">
    <source>
    </source>
</evidence>
<evidence type="ECO:0000269" key="4">
    <source>
    </source>
</evidence>
<evidence type="ECO:0000305" key="5"/>
<protein>
    <recommendedName>
        <fullName>E4-ORF1</fullName>
        <ecNumber>3.6.1.23</ecNumber>
    </recommendedName>
    <alternativeName>
        <fullName>Early E4 14.0 kDa protein</fullName>
    </alternativeName>
    <alternativeName>
        <fullName>ORF1</fullName>
    </alternativeName>
    <alternativeName>
        <fullName>Probable dUTPase E4 ORF1</fullName>
    </alternativeName>
</protein>
<organism>
    <name type="scientific">Human adenovirus D serotype 9</name>
    <name type="common">HAdV-9</name>
    <name type="synonym">Human adenovirus 9</name>
    <dbReference type="NCBI Taxonomy" id="10527"/>
    <lineage>
        <taxon>Viruses</taxon>
        <taxon>Varidnaviria</taxon>
        <taxon>Bamfordvirae</taxon>
        <taxon>Preplasmiviricota</taxon>
        <taxon>Tectiliviricetes</taxon>
        <taxon>Rowavirales</taxon>
        <taxon>Adenoviridae</taxon>
        <taxon>Mastadenovirus</taxon>
        <taxon>Human mastadenovirus D</taxon>
    </lineage>
</organism>
<comment type="function">
    <text evidence="3">Plays a key role in virus oncogenecity in animals. Binds and sequesters human MUPP1/MPDZ protein in the cytoplasm, preventing it from playing a role in cellular proliferation regulation. Induces cell transformation, probably by inactivating MPDZ protein.</text>
</comment>
<comment type="catalytic activity">
    <reaction>
        <text>dUTP + H2O = dUMP + diphosphate + H(+)</text>
        <dbReference type="Rhea" id="RHEA:10248"/>
        <dbReference type="ChEBI" id="CHEBI:15377"/>
        <dbReference type="ChEBI" id="CHEBI:15378"/>
        <dbReference type="ChEBI" id="CHEBI:33019"/>
        <dbReference type="ChEBI" id="CHEBI:61555"/>
        <dbReference type="ChEBI" id="CHEBI:246422"/>
        <dbReference type="EC" id="3.6.1.23"/>
    </reaction>
</comment>
<comment type="subunit">
    <text>Binds to human MPDZ.</text>
</comment>
<comment type="interaction">
    <interactant intactId="EBI-7401124">
        <id>P89079</id>
    </interactant>
    <interactant intactId="EBI-389325">
        <id>Q62696</id>
        <label>Dlg1</label>
    </interactant>
    <organismsDiffer>true</organismsDiffer>
    <experiments>4</experiments>
</comment>
<comment type="subcellular location">
    <subcellularLocation>
        <location evidence="4">Host cytoplasm</location>
    </subcellularLocation>
</comment>
<comment type="similarity">
    <text evidence="5">Belongs to the dUTPase family.</text>
</comment>
<sequence>MAESLYAFIDSPGGIAPVQEGTSNRYTFFCPESFHIPPHGVVLLHLKVSVLVPTGYQGRFMALNDYHARDILTQSDVIFAGRRQELTVLLFNHTDRFLYVRKGHPVGTLLLERVIFPSVKIATLV</sequence>
<dbReference type="EC" id="3.6.1.23"/>
<dbReference type="EMBL" id="S82508">
    <property type="protein sequence ID" value="AAB37504.1"/>
    <property type="molecule type" value="Genomic_DNA"/>
</dbReference>
<dbReference type="EMBL" id="AJ854486">
    <property type="protein sequence ID" value="CAI05991.1"/>
    <property type="molecule type" value="Genomic_DNA"/>
</dbReference>
<dbReference type="SMR" id="P89079"/>
<dbReference type="DIP" id="DIP-44835N"/>
<dbReference type="ELM" id="P89079"/>
<dbReference type="IntAct" id="P89079">
    <property type="interactions" value="3"/>
</dbReference>
<dbReference type="MINT" id="P89079"/>
<dbReference type="Proteomes" id="UP000118285">
    <property type="component" value="Genome"/>
</dbReference>
<dbReference type="GO" id="GO:0030430">
    <property type="term" value="C:host cell cytoplasm"/>
    <property type="evidence" value="ECO:0007669"/>
    <property type="project" value="UniProtKB-SubCell"/>
</dbReference>
<dbReference type="GO" id="GO:0004170">
    <property type="term" value="F:dUTP diphosphatase activity"/>
    <property type="evidence" value="ECO:0007669"/>
    <property type="project" value="UniProtKB-EC"/>
</dbReference>
<dbReference type="GO" id="GO:0009117">
    <property type="term" value="P:nucleotide metabolic process"/>
    <property type="evidence" value="ECO:0007669"/>
    <property type="project" value="UniProtKB-KW"/>
</dbReference>
<dbReference type="Gene3D" id="2.70.40.10">
    <property type="match status" value="1"/>
</dbReference>
<dbReference type="InterPro" id="IPR029054">
    <property type="entry name" value="dUTPase-like"/>
</dbReference>
<dbReference type="InterPro" id="IPR036157">
    <property type="entry name" value="dUTPase-like_sf"/>
</dbReference>
<dbReference type="Pfam" id="PF00692">
    <property type="entry name" value="dUTPase"/>
    <property type="match status" value="1"/>
</dbReference>
<dbReference type="SUPFAM" id="SSF51283">
    <property type="entry name" value="dUTPase-like"/>
    <property type="match status" value="1"/>
</dbReference>